<organism>
    <name type="scientific">Xenopus laevis</name>
    <name type="common">African clawed frog</name>
    <dbReference type="NCBI Taxonomy" id="8355"/>
    <lineage>
        <taxon>Eukaryota</taxon>
        <taxon>Metazoa</taxon>
        <taxon>Chordata</taxon>
        <taxon>Craniata</taxon>
        <taxon>Vertebrata</taxon>
        <taxon>Euteleostomi</taxon>
        <taxon>Amphibia</taxon>
        <taxon>Batrachia</taxon>
        <taxon>Anura</taxon>
        <taxon>Pipoidea</taxon>
        <taxon>Pipidae</taxon>
        <taxon>Xenopodinae</taxon>
        <taxon>Xenopus</taxon>
        <taxon>Xenopus</taxon>
    </lineage>
</organism>
<accession>Q66J91</accession>
<accession>Q6GN88</accession>
<feature type="chain" id="PRO_0000321543" description="S-adenosylmethionine sensor upstream of mTORC1">
    <location>
        <begin position="1"/>
        <end position="400"/>
    </location>
</feature>
<feature type="binding site" evidence="1">
    <location>
        <position position="99"/>
    </location>
    <ligand>
        <name>S-adenosyl-L-methionine</name>
        <dbReference type="ChEBI" id="CHEBI:59789"/>
    </ligand>
</feature>
<feature type="binding site" evidence="1">
    <location>
        <position position="168"/>
    </location>
    <ligand>
        <name>S-adenosyl-L-methionine</name>
        <dbReference type="ChEBI" id="CHEBI:59789"/>
    </ligand>
</feature>
<feature type="binding site" evidence="1">
    <location>
        <position position="186"/>
    </location>
    <ligand>
        <name>S-adenosyl-L-methionine</name>
        <dbReference type="ChEBI" id="CHEBI:59789"/>
    </ligand>
</feature>
<feature type="binding site" evidence="1">
    <location>
        <position position="198"/>
    </location>
    <ligand>
        <name>S-adenosyl-L-methionine</name>
        <dbReference type="ChEBI" id="CHEBI:59789"/>
    </ligand>
</feature>
<feature type="binding site" evidence="1">
    <location>
        <position position="199"/>
    </location>
    <ligand>
        <name>S-adenosyl-L-methionine</name>
        <dbReference type="ChEBI" id="CHEBI:59789"/>
    </ligand>
</feature>
<feature type="binding site" evidence="1">
    <location>
        <position position="240"/>
    </location>
    <ligand>
        <name>S-adenosyl-L-methionine</name>
        <dbReference type="ChEBI" id="CHEBI:59789"/>
    </ligand>
</feature>
<sequence length="400" mass="45750">MEAVLPSRCNREDVPGKARAERFVSGFPSVCEQKTEQEKLSGVVKRVHLDLRKKYRKAGDFEKIWLEHCKDDGRLCEYAVAMKALADNHWAKKCEGEGRIEWCLGVCQEYFFNGGKKKALEKDAKRDALNKLQSSSHAEAGVSDFGVPSIKPLNDEYMTGKIRLLDVGSCYNPFLKYEDFLAVGIDIVPAVETVFKCDFLNLQIQRPLQLAPDAIDAFLKQLSSPIDYLPTELFHVIVFSLLLSYFPSPYQRWICCKKAHELLTLNGLLLIITPDSSHQNRHAVMMKSWKIAIESLGFRRMTYSKFSHMHLMAFRKTSLKTTSDLLTRNYPDMLYIPQDFNYDGEEDHFSPCCARSELEDEQLACGFTELPDTPYDSDSGESHNSTMPFYEFEDPILLLT</sequence>
<name>SAMTR_XENLA</name>
<gene>
    <name evidence="1" type="primary">samtor</name>
    <name evidence="1" type="synonym">bmt2</name>
</gene>
<keyword id="KW-0489">Methyltransferase</keyword>
<keyword id="KW-1185">Reference proteome</keyword>
<keyword id="KW-0949">S-adenosyl-L-methionine</keyword>
<keyword id="KW-0808">Transferase</keyword>
<comment type="function">
    <text evidence="1">S-adenosyl-L-methionine-binding protein that acts as an inhibitor of mTORC1 signaling via interaction with the GATOR1 and KICSTOR complexes. Acts as a sensor of S-adenosyl-L-methionine to signal methionine sufficiency to mTORC1: in presence of methionine, binds S-adenosyl-L-methionine, leading to disrupt interaction with the GATOR1 and KICSTOR complexes and promote mTORC1 signaling. Upon methionine starvation, S-adenosyl-L-methionine levels are reduced, thereby promoting the association with GATOR1 and KICSTOR, leading to inhibit mTORC1 signaling. Probably also acts as a S-adenosyl-L-methionine-dependent methyltransferase.</text>
</comment>
<comment type="subunit">
    <text evidence="1">Interacts with the GATOR1 complex; interaction is disrupted when samtor binds S-adenosyl-L-methionine. Interacts with the KICSTOR complex; interaction is disrupted when samtor binds S-adenosyl-L-methionine.</text>
</comment>
<comment type="similarity">
    <text evidence="1">Belongs to the BMT2/SAMTOR family.</text>
</comment>
<dbReference type="EC" id="2.1.1.-" evidence="1"/>
<dbReference type="EMBL" id="BC073627">
    <property type="protein sequence ID" value="AAH73627.1"/>
    <property type="molecule type" value="mRNA"/>
</dbReference>
<dbReference type="EMBL" id="BC081015">
    <property type="protein sequence ID" value="AAH81015.1"/>
    <property type="molecule type" value="mRNA"/>
</dbReference>
<dbReference type="RefSeq" id="NP_001087629.1">
    <property type="nucleotide sequence ID" value="NM_001094160.1"/>
</dbReference>
<dbReference type="SMR" id="Q66J91"/>
<dbReference type="DNASU" id="447453"/>
<dbReference type="AGR" id="Xenbase:XB-GENE-17341679"/>
<dbReference type="Xenbase" id="XB-GENE-17341679">
    <property type="gene designation" value="samtor.S"/>
</dbReference>
<dbReference type="OMA" id="CCQKAYE"/>
<dbReference type="OrthoDB" id="5954793at2759"/>
<dbReference type="Proteomes" id="UP000186698">
    <property type="component" value="Unplaced"/>
</dbReference>
<dbReference type="Bgee" id="447453">
    <property type="expression patterns" value="Expressed in egg cell and 19 other cell types or tissues"/>
</dbReference>
<dbReference type="GO" id="GO:0008168">
    <property type="term" value="F:methyltransferase activity"/>
    <property type="evidence" value="ECO:0007669"/>
    <property type="project" value="UniProtKB-UniRule"/>
</dbReference>
<dbReference type="GO" id="GO:1904047">
    <property type="term" value="F:S-adenosyl-L-methionine binding"/>
    <property type="evidence" value="ECO:0000250"/>
    <property type="project" value="UniProtKB"/>
</dbReference>
<dbReference type="GO" id="GO:0034198">
    <property type="term" value="P:cellular response to amino acid starvation"/>
    <property type="evidence" value="ECO:0000250"/>
    <property type="project" value="UniProtKB"/>
</dbReference>
<dbReference type="GO" id="GO:0032259">
    <property type="term" value="P:methylation"/>
    <property type="evidence" value="ECO:0007669"/>
    <property type="project" value="UniProtKB-KW"/>
</dbReference>
<dbReference type="GO" id="GO:1904262">
    <property type="term" value="P:negative regulation of TORC1 signaling"/>
    <property type="evidence" value="ECO:0000318"/>
    <property type="project" value="GO_Central"/>
</dbReference>
<dbReference type="GO" id="GO:1903432">
    <property type="term" value="P:regulation of TORC1 signaling"/>
    <property type="evidence" value="ECO:0000250"/>
    <property type="project" value="UniProtKB"/>
</dbReference>
<dbReference type="FunFam" id="3.40.50.150:FF:000089">
    <property type="entry name" value="S-adenosylmethionine sensor upstream of mTORC1"/>
    <property type="match status" value="1"/>
</dbReference>
<dbReference type="Gene3D" id="3.40.50.150">
    <property type="entry name" value="Vaccinia Virus protein VP39"/>
    <property type="match status" value="1"/>
</dbReference>
<dbReference type="HAMAP" id="MF_03044">
    <property type="entry name" value="BMT2"/>
    <property type="match status" value="1"/>
</dbReference>
<dbReference type="InterPro" id="IPR021867">
    <property type="entry name" value="Bmt2/SAMTOR"/>
</dbReference>
<dbReference type="InterPro" id="IPR029063">
    <property type="entry name" value="SAM-dependent_MTases_sf"/>
</dbReference>
<dbReference type="PANTHER" id="PTHR21008:SF0">
    <property type="entry name" value="S-ADENOSYLMETHIONINE SENSOR UPSTREAM OF MTORC1"/>
    <property type="match status" value="1"/>
</dbReference>
<dbReference type="PANTHER" id="PTHR21008">
    <property type="entry name" value="S-ADENOSYLMETHIONINE SENSOR UPSTREAM OF MTORC1-RELATED"/>
    <property type="match status" value="1"/>
</dbReference>
<dbReference type="Pfam" id="PF11968">
    <property type="entry name" value="Bmt2"/>
    <property type="match status" value="1"/>
</dbReference>
<dbReference type="SUPFAM" id="SSF53335">
    <property type="entry name" value="S-adenosyl-L-methionine-dependent methyltransferases"/>
    <property type="match status" value="1"/>
</dbReference>
<evidence type="ECO:0000255" key="1">
    <source>
        <dbReference type="HAMAP-Rule" id="MF_03044"/>
    </source>
</evidence>
<proteinExistence type="evidence at transcript level"/>
<reference key="1">
    <citation type="submission" date="2004-08" db="EMBL/GenBank/DDBJ databases">
        <authorList>
            <consortium name="NIH - Xenopus Gene Collection (XGC) project"/>
        </authorList>
    </citation>
    <scope>NUCLEOTIDE SEQUENCE [LARGE SCALE MRNA]</scope>
    <source>
        <tissue>Embryo</tissue>
    </source>
</reference>
<protein>
    <recommendedName>
        <fullName evidence="1">S-adenosylmethionine sensor upstream of mTORC1</fullName>
    </recommendedName>
    <alternativeName>
        <fullName evidence="1">Probable methyltransferase BMT2 homolog</fullName>
        <ecNumber evidence="1">2.1.1.-</ecNumber>
    </alternativeName>
</protein>